<accession>Q9LV77</accession>
<accession>F4KGG8</accession>
<accession>Q9ZST6</accession>
<dbReference type="EC" id="6.3.5.4"/>
<dbReference type="EMBL" id="AF095453">
    <property type="protein sequence ID" value="AAC72837.1"/>
    <property type="molecule type" value="mRNA"/>
</dbReference>
<dbReference type="EMBL" id="AB019236">
    <property type="protein sequence ID" value="BAA97313.1"/>
    <property type="molecule type" value="Genomic_DNA"/>
</dbReference>
<dbReference type="EMBL" id="CP002688">
    <property type="protein sequence ID" value="AED97984.1"/>
    <property type="molecule type" value="Genomic_DNA"/>
</dbReference>
<dbReference type="EMBL" id="CP002688">
    <property type="protein sequence ID" value="AED97985.1"/>
    <property type="molecule type" value="Genomic_DNA"/>
</dbReference>
<dbReference type="EMBL" id="AF367340">
    <property type="protein sequence ID" value="AAK32927.1"/>
    <property type="molecule type" value="mRNA"/>
</dbReference>
<dbReference type="EMBL" id="AY124866">
    <property type="protein sequence ID" value="AAM70575.1"/>
    <property type="molecule type" value="mRNA"/>
</dbReference>
<dbReference type="RefSeq" id="NP_201306.2">
    <molecule id="Q9LV77-2"/>
    <property type="nucleotide sequence ID" value="NM_125900.2"/>
</dbReference>
<dbReference type="RefSeq" id="NP_851272.1">
    <molecule id="Q9LV77-1"/>
    <property type="nucleotide sequence ID" value="NM_180941.3"/>
</dbReference>
<dbReference type="SMR" id="Q9LV77"/>
<dbReference type="FunCoup" id="Q9LV77">
    <property type="interactions" value="1625"/>
</dbReference>
<dbReference type="STRING" id="3702.Q9LV77"/>
<dbReference type="iPTMnet" id="Q9LV77"/>
<dbReference type="PaxDb" id="3702-AT5G65010.2"/>
<dbReference type="ProMEX" id="Q9LV77"/>
<dbReference type="ProteomicsDB" id="246862">
    <molecule id="Q9LV77-1"/>
</dbReference>
<dbReference type="EnsemblPlants" id="AT5G65010.1">
    <molecule id="Q9LV77-1"/>
    <property type="protein sequence ID" value="AT5G65010.1"/>
    <property type="gene ID" value="AT5G65010"/>
</dbReference>
<dbReference type="EnsemblPlants" id="AT5G65010.2">
    <molecule id="Q9LV77-2"/>
    <property type="protein sequence ID" value="AT5G65010.2"/>
    <property type="gene ID" value="AT5G65010"/>
</dbReference>
<dbReference type="GeneID" id="836625"/>
<dbReference type="Gramene" id="AT5G65010.1">
    <molecule id="Q9LV77-1"/>
    <property type="protein sequence ID" value="AT5G65010.1"/>
    <property type="gene ID" value="AT5G65010"/>
</dbReference>
<dbReference type="Gramene" id="AT5G65010.2">
    <molecule id="Q9LV77-2"/>
    <property type="protein sequence ID" value="AT5G65010.2"/>
    <property type="gene ID" value="AT5G65010"/>
</dbReference>
<dbReference type="KEGG" id="ath:AT5G65010"/>
<dbReference type="Araport" id="AT5G65010"/>
<dbReference type="TAIR" id="AT5G65010">
    <property type="gene designation" value="ASN2"/>
</dbReference>
<dbReference type="eggNOG" id="KOG0571">
    <property type="taxonomic scope" value="Eukaryota"/>
</dbReference>
<dbReference type="HOGENOM" id="CLU_014658_2_2_1"/>
<dbReference type="InParanoid" id="Q9LV77"/>
<dbReference type="OMA" id="CYENCYL"/>
<dbReference type="OrthoDB" id="409189at2759"/>
<dbReference type="PhylomeDB" id="Q9LV77"/>
<dbReference type="UniPathway" id="UPA00134"/>
<dbReference type="PRO" id="PR:Q9LV77"/>
<dbReference type="Proteomes" id="UP000006548">
    <property type="component" value="Chromosome 5"/>
</dbReference>
<dbReference type="ExpressionAtlas" id="Q9LV77">
    <property type="expression patterns" value="baseline and differential"/>
</dbReference>
<dbReference type="GO" id="GO:0005829">
    <property type="term" value="C:cytosol"/>
    <property type="evidence" value="ECO:0007005"/>
    <property type="project" value="TAIR"/>
</dbReference>
<dbReference type="GO" id="GO:0009506">
    <property type="term" value="C:plasmodesma"/>
    <property type="evidence" value="ECO:0007005"/>
    <property type="project" value="TAIR"/>
</dbReference>
<dbReference type="GO" id="GO:0004066">
    <property type="term" value="F:asparagine synthase (glutamine-hydrolyzing) activity"/>
    <property type="evidence" value="ECO:0007669"/>
    <property type="project" value="UniProtKB-EC"/>
</dbReference>
<dbReference type="GO" id="GO:0005524">
    <property type="term" value="F:ATP binding"/>
    <property type="evidence" value="ECO:0007669"/>
    <property type="project" value="UniProtKB-KW"/>
</dbReference>
<dbReference type="GO" id="GO:0097164">
    <property type="term" value="P:ammonium ion metabolic process"/>
    <property type="evidence" value="ECO:0000315"/>
    <property type="project" value="TAIR"/>
</dbReference>
<dbReference type="GO" id="GO:0042538">
    <property type="term" value="P:hyperosmotic salinity response"/>
    <property type="evidence" value="ECO:0000315"/>
    <property type="project" value="TAIR"/>
</dbReference>
<dbReference type="GO" id="GO:0070981">
    <property type="term" value="P:L-asparagine biosynthetic process"/>
    <property type="evidence" value="ECO:0007669"/>
    <property type="project" value="UniProtKB-UniPathway"/>
</dbReference>
<dbReference type="CDD" id="cd01991">
    <property type="entry name" value="Asn_synthase_B_C"/>
    <property type="match status" value="1"/>
</dbReference>
<dbReference type="CDD" id="cd00712">
    <property type="entry name" value="AsnB"/>
    <property type="match status" value="1"/>
</dbReference>
<dbReference type="FunFam" id="3.40.50.620:FF:000055">
    <property type="entry name" value="Asparagine synthetase [glutamine-hydrolyzing]"/>
    <property type="match status" value="1"/>
</dbReference>
<dbReference type="FunFam" id="3.60.20.10:FF:000024">
    <property type="entry name" value="Asparagine synthetase [glutamine-hydrolyzing]"/>
    <property type="match status" value="1"/>
</dbReference>
<dbReference type="Gene3D" id="3.60.20.10">
    <property type="entry name" value="Glutamine Phosphoribosylpyrophosphate, subunit 1, domain 1"/>
    <property type="match status" value="1"/>
</dbReference>
<dbReference type="Gene3D" id="3.40.50.620">
    <property type="entry name" value="HUPs"/>
    <property type="match status" value="1"/>
</dbReference>
<dbReference type="InterPro" id="IPR006426">
    <property type="entry name" value="Asn_synth_AEB"/>
</dbReference>
<dbReference type="InterPro" id="IPR001962">
    <property type="entry name" value="Asn_synthase"/>
</dbReference>
<dbReference type="InterPro" id="IPR050795">
    <property type="entry name" value="Asn_Synthetase"/>
</dbReference>
<dbReference type="InterPro" id="IPR033738">
    <property type="entry name" value="AsnB_N"/>
</dbReference>
<dbReference type="InterPro" id="IPR017932">
    <property type="entry name" value="GATase_2_dom"/>
</dbReference>
<dbReference type="InterPro" id="IPR029055">
    <property type="entry name" value="Ntn_hydrolases_N"/>
</dbReference>
<dbReference type="InterPro" id="IPR014729">
    <property type="entry name" value="Rossmann-like_a/b/a_fold"/>
</dbReference>
<dbReference type="NCBIfam" id="TIGR01536">
    <property type="entry name" value="asn_synth_AEB"/>
    <property type="match status" value="1"/>
</dbReference>
<dbReference type="NCBIfam" id="NF006949">
    <property type="entry name" value="PRK09431.1"/>
    <property type="match status" value="1"/>
</dbReference>
<dbReference type="PANTHER" id="PTHR11772">
    <property type="entry name" value="ASPARAGINE SYNTHETASE"/>
    <property type="match status" value="1"/>
</dbReference>
<dbReference type="PANTHER" id="PTHR11772:SF2">
    <property type="entry name" value="ASPARAGINE SYNTHETASE [GLUTAMINE-HYDROLYZING]"/>
    <property type="match status" value="1"/>
</dbReference>
<dbReference type="Pfam" id="PF00733">
    <property type="entry name" value="Asn_synthase"/>
    <property type="match status" value="1"/>
</dbReference>
<dbReference type="Pfam" id="PF13537">
    <property type="entry name" value="GATase_7"/>
    <property type="match status" value="1"/>
</dbReference>
<dbReference type="PIRSF" id="PIRSF001589">
    <property type="entry name" value="Asn_synthetase_glu-h"/>
    <property type="match status" value="1"/>
</dbReference>
<dbReference type="SUPFAM" id="SSF52402">
    <property type="entry name" value="Adenine nucleotide alpha hydrolases-like"/>
    <property type="match status" value="1"/>
</dbReference>
<dbReference type="SUPFAM" id="SSF56235">
    <property type="entry name" value="N-terminal nucleophile aminohydrolases (Ntn hydrolases)"/>
    <property type="match status" value="1"/>
</dbReference>
<dbReference type="PROSITE" id="PS51278">
    <property type="entry name" value="GATASE_TYPE_2"/>
    <property type="match status" value="1"/>
</dbReference>
<sequence>MCGILAVLGCIDNSQAKRSRIIELSRRLRHRGPDWSGLHCYEDCYLAHERLAIIDPTSGDQPLYNEDKTVAVTVNGEIYNHKILREKLKSHQFRTGSDCEVIAHLYEEHGEEFIDMLDGMFAFVLLDTRDKSFIAARDAIGITPLYIGWGLDGSVWFASEMKALSDDCEQFMSFPPGHIYSSKQGGLRRWYNPPWYNEQVPSTPYDPLVLRNAFEKAVIKRLMTDVPFGVLLSGGLDSSLVAAVALRHLEKSEAARQWGSQLHTFCIGLQGSPDLKAGREVADYLGTRHHEFQFTVQDGIDAIEEVIYHIETYDVTTIRASTPMFLMSRKIKSLGVKMVLSGEGSDEILGGYLYFHKAPNKKEFHEETCRKIKALHQFDCLRANKSTSAWGVEARVPFLDKEFLNVAMSIDPEWKLIKPDLGRIEKWVLRNAFDDEERPYLPKHILYRQKEQFSDGVGYSWIDGLKDHANKHVSDTMLSNASFVFPDNTPLTKEAYYYRTIFEKFFPKSAARATVPGGPSIACSTAKAVEWDATWSKNLDPSGRAALGVHVAAYEEDKAAAAAKAGSDLVDPLPKNGT</sequence>
<comment type="function">
    <text evidence="5">Essential for nitrogen assimilation, distribution and remobilization within the plant via the phloem.</text>
</comment>
<comment type="catalytic activity">
    <reaction>
        <text>L-aspartate + L-glutamine + ATP + H2O = L-asparagine + L-glutamate + AMP + diphosphate + H(+)</text>
        <dbReference type="Rhea" id="RHEA:12228"/>
        <dbReference type="ChEBI" id="CHEBI:15377"/>
        <dbReference type="ChEBI" id="CHEBI:15378"/>
        <dbReference type="ChEBI" id="CHEBI:29985"/>
        <dbReference type="ChEBI" id="CHEBI:29991"/>
        <dbReference type="ChEBI" id="CHEBI:30616"/>
        <dbReference type="ChEBI" id="CHEBI:33019"/>
        <dbReference type="ChEBI" id="CHEBI:58048"/>
        <dbReference type="ChEBI" id="CHEBI:58359"/>
        <dbReference type="ChEBI" id="CHEBI:456215"/>
        <dbReference type="EC" id="6.3.5.4"/>
    </reaction>
</comment>
<comment type="pathway">
    <text>Amino-acid biosynthesis; L-asparagine biosynthesis.</text>
</comment>
<comment type="alternative products">
    <event type="alternative splicing"/>
    <isoform>
        <id>Q9LV77-1</id>
        <name>1</name>
        <sequence type="displayed"/>
    </isoform>
    <isoform>
        <id>Q9LV77-2</id>
        <name>2</name>
        <sequence type="described" ref="VSP_044714"/>
    </isoform>
</comment>
<comment type="tissue specificity">
    <text evidence="5 6">Expressed in the vascular region adjacent to leaf mesophyll cells in the companion cell-sieve tube element complex.</text>
</comment>
<comment type="induction">
    <text evidence="3 5 6">By light and sucrose. Down-regulated by dark.</text>
</comment>
<comment type="disruption phenotype">
    <text evidence="4 5">Pale green leaf phenotype and reduction of biomass in mature plants. Increased levels of asparagine, proline and ammonium in response to salt treatment.</text>
</comment>
<reference key="1">
    <citation type="journal article" date="1998" name="Plant J.">
        <title>Reciprocal regulation of distinct asparagine synthetase genes by light and metabolites in Arabidopsis thaliana.</title>
        <authorList>
            <person name="Lam H.M."/>
            <person name="Hsieh M.H."/>
            <person name="Coruzzi G."/>
        </authorList>
    </citation>
    <scope>NUCLEOTIDE SEQUENCE [MRNA] (ISOFORM 1)</scope>
    <scope>TISSUE SPECIFICITY</scope>
    <scope>INDUCTION</scope>
</reference>
<reference key="2">
    <citation type="journal article" date="2000" name="DNA Res.">
        <title>Structural analysis of Arabidopsis thaliana chromosome 5. X. Sequence features of the regions of 3,076,755 bp covered by sixty P1 and TAC clones.</title>
        <authorList>
            <person name="Sato S."/>
            <person name="Nakamura Y."/>
            <person name="Kaneko T."/>
            <person name="Katoh T."/>
            <person name="Asamizu E."/>
            <person name="Kotani H."/>
            <person name="Tabata S."/>
        </authorList>
    </citation>
    <scope>NUCLEOTIDE SEQUENCE [LARGE SCALE GENOMIC DNA]</scope>
    <source>
        <strain>cv. Columbia</strain>
    </source>
</reference>
<reference key="3">
    <citation type="journal article" date="2017" name="Plant J.">
        <title>Araport11: a complete reannotation of the Arabidopsis thaliana reference genome.</title>
        <authorList>
            <person name="Cheng C.Y."/>
            <person name="Krishnakumar V."/>
            <person name="Chan A.P."/>
            <person name="Thibaud-Nissen F."/>
            <person name="Schobel S."/>
            <person name="Town C.D."/>
        </authorList>
    </citation>
    <scope>GENOME REANNOTATION</scope>
    <source>
        <strain>cv. Columbia</strain>
    </source>
</reference>
<reference key="4">
    <citation type="journal article" date="2003" name="Science">
        <title>Empirical analysis of transcriptional activity in the Arabidopsis genome.</title>
        <authorList>
            <person name="Yamada K."/>
            <person name="Lim J."/>
            <person name="Dale J.M."/>
            <person name="Chen H."/>
            <person name="Shinn P."/>
            <person name="Palm C.J."/>
            <person name="Southwick A.M."/>
            <person name="Wu H.C."/>
            <person name="Kim C.J."/>
            <person name="Nguyen M."/>
            <person name="Pham P.K."/>
            <person name="Cheuk R.F."/>
            <person name="Karlin-Newmann G."/>
            <person name="Liu S.X."/>
            <person name="Lam B."/>
            <person name="Sakano H."/>
            <person name="Wu T."/>
            <person name="Yu G."/>
            <person name="Miranda M."/>
            <person name="Quach H.L."/>
            <person name="Tripp M."/>
            <person name="Chang C.H."/>
            <person name="Lee J.M."/>
            <person name="Toriumi M.J."/>
            <person name="Chan M.M."/>
            <person name="Tang C.C."/>
            <person name="Onodera C.S."/>
            <person name="Deng J.M."/>
            <person name="Akiyama K."/>
            <person name="Ansari Y."/>
            <person name="Arakawa T."/>
            <person name="Banh J."/>
            <person name="Banno F."/>
            <person name="Bowser L."/>
            <person name="Brooks S.Y."/>
            <person name="Carninci P."/>
            <person name="Chao Q."/>
            <person name="Choy N."/>
            <person name="Enju A."/>
            <person name="Goldsmith A.D."/>
            <person name="Gurjal M."/>
            <person name="Hansen N.F."/>
            <person name="Hayashizaki Y."/>
            <person name="Johnson-Hopson C."/>
            <person name="Hsuan V.W."/>
            <person name="Iida K."/>
            <person name="Karnes M."/>
            <person name="Khan S."/>
            <person name="Koesema E."/>
            <person name="Ishida J."/>
            <person name="Jiang P.X."/>
            <person name="Jones T."/>
            <person name="Kawai J."/>
            <person name="Kamiya A."/>
            <person name="Meyers C."/>
            <person name="Nakajima M."/>
            <person name="Narusaka M."/>
            <person name="Seki M."/>
            <person name="Sakurai T."/>
            <person name="Satou M."/>
            <person name="Tamse R."/>
            <person name="Vaysberg M."/>
            <person name="Wallender E.K."/>
            <person name="Wong C."/>
            <person name="Yamamura Y."/>
            <person name="Yuan S."/>
            <person name="Shinozaki K."/>
            <person name="Davis R.W."/>
            <person name="Theologis A."/>
            <person name="Ecker J.R."/>
        </authorList>
    </citation>
    <scope>NUCLEOTIDE SEQUENCE [LARGE SCALE MRNA] (ISOFORM 1)</scope>
    <source>
        <strain>cv. Columbia</strain>
    </source>
</reference>
<reference key="5">
    <citation type="journal article" date="2004" name="Plant Physiol.">
        <title>Correlation of ASN2 gene expression with ammonium metabolism in Arabidopsis.</title>
        <authorList>
            <person name="Wong H.K."/>
            <person name="Chan H.K."/>
            <person name="Coruzzi G.M."/>
            <person name="Lam H.M."/>
        </authorList>
    </citation>
    <scope>INDUCTION</scope>
</reference>
<reference key="6">
    <citation type="journal article" date="2011" name="Plant Physiol. Biochem.">
        <title>An Arabidopsis mutant disrupted in ASN2 encoding asparagine synthetase 2 exhibits low salt stress tolerance.</title>
        <authorList>
            <person name="Maaroufi-Dguimi H."/>
            <person name="Debouba M."/>
            <person name="Gaufichon L."/>
            <person name="Clement G."/>
            <person name="Gouia H."/>
            <person name="Hajjaji A."/>
            <person name="Suzuki A."/>
        </authorList>
    </citation>
    <scope>DISRUPTION PHENOTYPE</scope>
</reference>
<reference key="7">
    <citation type="journal article" date="2013" name="Plant Cell Environ.">
        <title>Arabidopsis thaliana ASN2 encoding asparagine synthetase is involved in the control of nitrogen assimilation and export during vegetative growth.</title>
        <authorList>
            <person name="Gaufichon L."/>
            <person name="Masclaux-Daubresse C."/>
            <person name="Tcherkez G."/>
            <person name="Reisdorf-Cren M."/>
            <person name="Sakakibara Y."/>
            <person name="Hase T."/>
            <person name="Clement G."/>
            <person name="Avice J.C."/>
            <person name="Grandjean O."/>
            <person name="Marmagne A."/>
            <person name="Boutet-Mercey S."/>
            <person name="Azzopardi M."/>
            <person name="Soulay F."/>
            <person name="Suzuki A."/>
        </authorList>
    </citation>
    <scope>FUNCTION</scope>
    <scope>TISSUE SPECIFICITY</scope>
    <scope>INDUCTION</scope>
    <scope>DISRUPTION PHENOTYPE</scope>
</reference>
<gene>
    <name type="primary">ASN2</name>
    <name type="ordered locus">At5g65010</name>
    <name type="ORF">MXK3.25</name>
</gene>
<evidence type="ECO:0000250" key="1"/>
<evidence type="ECO:0000255" key="2">
    <source>
        <dbReference type="PROSITE-ProRule" id="PRU00609"/>
    </source>
</evidence>
<evidence type="ECO:0000269" key="3">
    <source>
    </source>
</evidence>
<evidence type="ECO:0000269" key="4">
    <source>
    </source>
</evidence>
<evidence type="ECO:0000269" key="5">
    <source>
    </source>
</evidence>
<evidence type="ECO:0000269" key="6">
    <source>
    </source>
</evidence>
<evidence type="ECO:0000305" key="7"/>
<protein>
    <recommendedName>
        <fullName>Asparagine synthetase [glutamine-hydrolyzing] 2</fullName>
        <ecNumber>6.3.5.4</ecNumber>
    </recommendedName>
    <alternativeName>
        <fullName>Glutamine-dependent asparagine synthetase 2</fullName>
    </alternativeName>
</protein>
<feature type="initiator methionine" description="Removed" evidence="1">
    <location>
        <position position="1"/>
    </location>
</feature>
<feature type="chain" id="PRO_0000420840" description="Asparagine synthetase [glutamine-hydrolyzing] 2">
    <location>
        <begin position="2"/>
        <end position="578"/>
    </location>
</feature>
<feature type="domain" description="Glutamine amidotransferase type-2" evidence="2">
    <location>
        <begin position="2"/>
        <end position="185"/>
    </location>
</feature>
<feature type="domain" description="Asparagine synthetase">
    <location>
        <begin position="210"/>
        <end position="450"/>
    </location>
</feature>
<feature type="active site" description="For GATase activity" evidence="1">
    <location>
        <position position="2"/>
    </location>
</feature>
<feature type="binding site" evidence="1">
    <location>
        <begin position="50"/>
        <end position="54"/>
    </location>
    <ligand>
        <name>L-glutamine</name>
        <dbReference type="ChEBI" id="CHEBI:58359"/>
    </ligand>
</feature>
<feature type="binding site" evidence="1">
    <location>
        <begin position="75"/>
        <end position="77"/>
    </location>
    <ligand>
        <name>L-glutamine</name>
        <dbReference type="ChEBI" id="CHEBI:58359"/>
    </ligand>
</feature>
<feature type="binding site" evidence="1">
    <location>
        <position position="98"/>
    </location>
    <ligand>
        <name>L-glutamine</name>
        <dbReference type="ChEBI" id="CHEBI:58359"/>
    </ligand>
</feature>
<feature type="binding site" evidence="1">
    <location>
        <position position="231"/>
    </location>
    <ligand>
        <name>ATP</name>
        <dbReference type="ChEBI" id="CHEBI:30616"/>
    </ligand>
</feature>
<feature type="binding site" evidence="1">
    <location>
        <position position="267"/>
    </location>
    <ligand>
        <name>ATP</name>
        <dbReference type="ChEBI" id="CHEBI:30616"/>
    </ligand>
</feature>
<feature type="binding site" evidence="1">
    <location>
        <begin position="341"/>
        <end position="342"/>
    </location>
    <ligand>
        <name>ATP</name>
        <dbReference type="ChEBI" id="CHEBI:30616"/>
    </ligand>
</feature>
<feature type="site" description="Important for beta-aspartyl-AMP intermediate formation" evidence="1">
    <location>
        <position position="343"/>
    </location>
</feature>
<feature type="splice variant" id="VSP_044714" description="In isoform 2." evidence="7">
    <original>K</original>
    <variation>KQ</variation>
    <location>
        <position position="508"/>
    </location>
</feature>
<feature type="sequence conflict" description="In Ref. 1; AAC72837." evidence="7" ref="1">
    <original>V</original>
    <variation>F</variation>
    <location>
        <position position="484"/>
    </location>
</feature>
<proteinExistence type="evidence at transcript level"/>
<organism>
    <name type="scientific">Arabidopsis thaliana</name>
    <name type="common">Mouse-ear cress</name>
    <dbReference type="NCBI Taxonomy" id="3702"/>
    <lineage>
        <taxon>Eukaryota</taxon>
        <taxon>Viridiplantae</taxon>
        <taxon>Streptophyta</taxon>
        <taxon>Embryophyta</taxon>
        <taxon>Tracheophyta</taxon>
        <taxon>Spermatophyta</taxon>
        <taxon>Magnoliopsida</taxon>
        <taxon>eudicotyledons</taxon>
        <taxon>Gunneridae</taxon>
        <taxon>Pentapetalae</taxon>
        <taxon>rosids</taxon>
        <taxon>malvids</taxon>
        <taxon>Brassicales</taxon>
        <taxon>Brassicaceae</taxon>
        <taxon>Camelineae</taxon>
        <taxon>Arabidopsis</taxon>
    </lineage>
</organism>
<name>ASNS2_ARATH</name>
<keyword id="KW-0025">Alternative splicing</keyword>
<keyword id="KW-0028">Amino-acid biosynthesis</keyword>
<keyword id="KW-0061">Asparagine biosynthesis</keyword>
<keyword id="KW-0067">ATP-binding</keyword>
<keyword id="KW-0315">Glutamine amidotransferase</keyword>
<keyword id="KW-0436">Ligase</keyword>
<keyword id="KW-0547">Nucleotide-binding</keyword>
<keyword id="KW-1185">Reference proteome</keyword>